<feature type="chain" id="PRO_1000215521" description="Nucleoside triphosphate/diphosphate phosphatase">
    <location>
        <begin position="1"/>
        <end position="177"/>
    </location>
</feature>
<feature type="active site" description="Proton donor" evidence="1">
    <location>
        <position position="24"/>
    </location>
</feature>
<feature type="binding site" evidence="1">
    <location>
        <position position="88"/>
    </location>
    <ligand>
        <name>Mg(2+)</name>
        <dbReference type="ChEBI" id="CHEBI:18420"/>
        <label>1</label>
    </ligand>
</feature>
<feature type="binding site" evidence="1">
    <location>
        <position position="104"/>
    </location>
    <ligand>
        <name>Mg(2+)</name>
        <dbReference type="ChEBI" id="CHEBI:18420"/>
        <label>1</label>
    </ligand>
</feature>
<feature type="binding site" evidence="1">
    <location>
        <position position="106"/>
    </location>
    <ligand>
        <name>Mg(2+)</name>
        <dbReference type="ChEBI" id="CHEBI:18420"/>
        <label>2</label>
    </ligand>
</feature>
<feature type="binding site" evidence="1">
    <location>
        <position position="108"/>
    </location>
    <ligand>
        <name>Mg(2+)</name>
        <dbReference type="ChEBI" id="CHEBI:18420"/>
        <label>1</label>
    </ligand>
</feature>
<feature type="binding site" evidence="1">
    <location>
        <position position="108"/>
    </location>
    <ligand>
        <name>Mg(2+)</name>
        <dbReference type="ChEBI" id="CHEBI:18420"/>
        <label>2</label>
    </ligand>
</feature>
<feature type="binding site" evidence="1">
    <location>
        <position position="121"/>
    </location>
    <ligand>
        <name>Mg(2+)</name>
        <dbReference type="ChEBI" id="CHEBI:18420"/>
        <label>2</label>
    </ligand>
</feature>
<feature type="binding site" evidence="1">
    <location>
        <position position="124"/>
    </location>
    <ligand>
        <name>Mg(2+)</name>
        <dbReference type="ChEBI" id="CHEBI:18420"/>
        <label>2</label>
    </ligand>
</feature>
<evidence type="ECO:0000255" key="1">
    <source>
        <dbReference type="HAMAP-Rule" id="MF_01568"/>
    </source>
</evidence>
<accession>C5D5T7</accession>
<comment type="function">
    <text evidence="1">Has nucleoside phosphatase activity towards nucleoside triphosphates and nucleoside diphosphates.</text>
</comment>
<comment type="catalytic activity">
    <reaction evidence="1">
        <text>a ribonucleoside 5'-triphosphate + H2O = a ribonucleoside 5'-diphosphate + phosphate + H(+)</text>
        <dbReference type="Rhea" id="RHEA:23680"/>
        <dbReference type="ChEBI" id="CHEBI:15377"/>
        <dbReference type="ChEBI" id="CHEBI:15378"/>
        <dbReference type="ChEBI" id="CHEBI:43474"/>
        <dbReference type="ChEBI" id="CHEBI:57930"/>
        <dbReference type="ChEBI" id="CHEBI:61557"/>
        <dbReference type="EC" id="3.6.1.15"/>
    </reaction>
</comment>
<comment type="catalytic activity">
    <reaction evidence="1">
        <text>a ribonucleoside 5'-diphosphate + H2O = a ribonucleoside 5'-phosphate + phosphate + H(+)</text>
        <dbReference type="Rhea" id="RHEA:36799"/>
        <dbReference type="ChEBI" id="CHEBI:15377"/>
        <dbReference type="ChEBI" id="CHEBI:15378"/>
        <dbReference type="ChEBI" id="CHEBI:43474"/>
        <dbReference type="ChEBI" id="CHEBI:57930"/>
        <dbReference type="ChEBI" id="CHEBI:58043"/>
        <dbReference type="EC" id="3.6.1.6"/>
    </reaction>
</comment>
<comment type="cofactor">
    <cofactor evidence="1">
        <name>Mg(2+)</name>
        <dbReference type="ChEBI" id="CHEBI:18420"/>
    </cofactor>
</comment>
<comment type="similarity">
    <text evidence="1">Belongs to the Ntdp family.</text>
</comment>
<keyword id="KW-0378">Hydrolase</keyword>
<keyword id="KW-0460">Magnesium</keyword>
<keyword id="KW-0479">Metal-binding</keyword>
<organism>
    <name type="scientific">Geobacillus sp. (strain WCH70)</name>
    <dbReference type="NCBI Taxonomy" id="471223"/>
    <lineage>
        <taxon>Bacteria</taxon>
        <taxon>Bacillati</taxon>
        <taxon>Bacillota</taxon>
        <taxon>Bacilli</taxon>
        <taxon>Bacillales</taxon>
        <taxon>Anoxybacillaceae</taxon>
        <taxon>Geobacillus</taxon>
    </lineage>
</organism>
<gene>
    <name type="ordered locus">GWCH70_0474</name>
</gene>
<reference key="1">
    <citation type="submission" date="2009-06" db="EMBL/GenBank/DDBJ databases">
        <title>Complete sequence of chromosome of Geopacillus sp. WCH70.</title>
        <authorList>
            <consortium name="US DOE Joint Genome Institute"/>
            <person name="Lucas S."/>
            <person name="Copeland A."/>
            <person name="Lapidus A."/>
            <person name="Glavina del Rio T."/>
            <person name="Dalin E."/>
            <person name="Tice H."/>
            <person name="Bruce D."/>
            <person name="Goodwin L."/>
            <person name="Pitluck S."/>
            <person name="Chertkov O."/>
            <person name="Brettin T."/>
            <person name="Detter J.C."/>
            <person name="Han C."/>
            <person name="Larimer F."/>
            <person name="Land M."/>
            <person name="Hauser L."/>
            <person name="Kyrpides N."/>
            <person name="Mikhailova N."/>
            <person name="Brumm P."/>
            <person name="Mead D.A."/>
            <person name="Richardson P."/>
        </authorList>
    </citation>
    <scope>NUCLEOTIDE SEQUENCE [LARGE SCALE GENOMIC DNA]</scope>
    <source>
        <strain>WCH70</strain>
    </source>
</reference>
<sequence length="177" mass="21168">MSGYPAEGEIIQIHSYKHNGLIHRVWEESIVLKGTSTCIIGANDKTMVTEADGRTWVTREPAICFFHAKHWFNIIGMIREEGIYYYCNLSSPFVWDEEALKYIDYDLDIKVFPDMTYILLDEDEYERHRKEMNYPDVIDRILKNNVKKLISWIHERKGPFAPDFIDKWYEKFLSYRK</sequence>
<name>NTDP_GEOSW</name>
<dbReference type="EC" id="3.6.1.15" evidence="1"/>
<dbReference type="EC" id="3.6.1.6" evidence="1"/>
<dbReference type="EMBL" id="CP001638">
    <property type="protein sequence ID" value="ACS23385.1"/>
    <property type="molecule type" value="Genomic_DNA"/>
</dbReference>
<dbReference type="SMR" id="C5D5T7"/>
<dbReference type="STRING" id="471223.GWCH70_0474"/>
<dbReference type="KEGG" id="gwc:GWCH70_0474"/>
<dbReference type="eggNOG" id="COG3557">
    <property type="taxonomic scope" value="Bacteria"/>
</dbReference>
<dbReference type="HOGENOM" id="CLU_109787_1_0_9"/>
<dbReference type="OrthoDB" id="1645325at2"/>
<dbReference type="GO" id="GO:0000287">
    <property type="term" value="F:magnesium ion binding"/>
    <property type="evidence" value="ECO:0007669"/>
    <property type="project" value="UniProtKB-UniRule"/>
</dbReference>
<dbReference type="GO" id="GO:0017110">
    <property type="term" value="F:nucleoside diphosphate phosphatase activity"/>
    <property type="evidence" value="ECO:0007669"/>
    <property type="project" value="UniProtKB-UniRule"/>
</dbReference>
<dbReference type="GO" id="GO:0017111">
    <property type="term" value="F:ribonucleoside triphosphate phosphatase activity"/>
    <property type="evidence" value="ECO:0007669"/>
    <property type="project" value="UniProtKB-UniRule"/>
</dbReference>
<dbReference type="Gene3D" id="2.40.380.10">
    <property type="entry name" value="FomD-like"/>
    <property type="match status" value="1"/>
</dbReference>
<dbReference type="HAMAP" id="MF_01568">
    <property type="entry name" value="Ntdp"/>
    <property type="match status" value="1"/>
</dbReference>
<dbReference type="InterPro" id="IPR007295">
    <property type="entry name" value="DUF402"/>
</dbReference>
<dbReference type="InterPro" id="IPR035930">
    <property type="entry name" value="FomD-like_sf"/>
</dbReference>
<dbReference type="InterPro" id="IPR050212">
    <property type="entry name" value="Ntdp-like"/>
</dbReference>
<dbReference type="InterPro" id="IPR016882">
    <property type="entry name" value="SA1684"/>
</dbReference>
<dbReference type="NCBIfam" id="NF010183">
    <property type="entry name" value="PRK13662.1"/>
    <property type="match status" value="1"/>
</dbReference>
<dbReference type="PANTHER" id="PTHR39159">
    <property type="match status" value="1"/>
</dbReference>
<dbReference type="PANTHER" id="PTHR39159:SF1">
    <property type="entry name" value="UPF0374 PROTEIN YGAC"/>
    <property type="match status" value="1"/>
</dbReference>
<dbReference type="Pfam" id="PF04167">
    <property type="entry name" value="DUF402"/>
    <property type="match status" value="1"/>
</dbReference>
<dbReference type="PIRSF" id="PIRSF028345">
    <property type="entry name" value="UCP028345"/>
    <property type="match status" value="1"/>
</dbReference>
<dbReference type="SUPFAM" id="SSF159234">
    <property type="entry name" value="FomD-like"/>
    <property type="match status" value="1"/>
</dbReference>
<protein>
    <recommendedName>
        <fullName evidence="1">Nucleoside triphosphate/diphosphate phosphatase</fullName>
        <ecNumber evidence="1">3.6.1.15</ecNumber>
        <ecNumber evidence="1">3.6.1.6</ecNumber>
    </recommendedName>
</protein>
<proteinExistence type="inferred from homology"/>